<name>CF184_HUMAN</name>
<organism>
    <name type="scientific">Homo sapiens</name>
    <name type="common">Human</name>
    <dbReference type="NCBI Taxonomy" id="9606"/>
    <lineage>
        <taxon>Eukaryota</taxon>
        <taxon>Metazoa</taxon>
        <taxon>Chordata</taxon>
        <taxon>Craniata</taxon>
        <taxon>Vertebrata</taxon>
        <taxon>Euteleostomi</taxon>
        <taxon>Mammalia</taxon>
        <taxon>Eutheria</taxon>
        <taxon>Euarchontoglires</taxon>
        <taxon>Primates</taxon>
        <taxon>Haplorrhini</taxon>
        <taxon>Catarrhini</taxon>
        <taxon>Hominidae</taxon>
        <taxon>Homo</taxon>
    </lineage>
</organism>
<gene>
    <name evidence="7" type="primary">CFAP184</name>
    <name type="synonym">CCDC96</name>
</gene>
<evidence type="ECO:0000250" key="1">
    <source>
        <dbReference type="UniProtKB" id="I7M6D6"/>
    </source>
</evidence>
<evidence type="ECO:0000255" key="2"/>
<evidence type="ECO:0000256" key="3">
    <source>
        <dbReference type="SAM" id="MobiDB-lite"/>
    </source>
</evidence>
<evidence type="ECO:0000269" key="4">
    <source>
    </source>
</evidence>
<evidence type="ECO:0000269" key="5">
    <source>
    </source>
</evidence>
<evidence type="ECO:0000305" key="6"/>
<evidence type="ECO:0000312" key="7">
    <source>
        <dbReference type="HGNC" id="HGNC:26900"/>
    </source>
</evidence>
<keyword id="KW-0002">3D-structure</keyword>
<keyword id="KW-0966">Cell projection</keyword>
<keyword id="KW-0175">Coiled coil</keyword>
<keyword id="KW-0963">Cytoplasm</keyword>
<keyword id="KW-0206">Cytoskeleton</keyword>
<keyword id="KW-1267">Proteomics identification</keyword>
<keyword id="KW-1185">Reference proteome</keyword>
<accession>Q2M329</accession>
<accession>Q8N2I7</accession>
<sequence length="555" mass="62711">MDVSSEHTKDPGGEGGDGESLAARPSKIKASSGPPTSPEPGELESEPEEEEEEQAASQGGTAADEQAEAPKGLTAAEAAGEEGPGEPGRPAEPQPEPEEPAEVGAEEPAQPEPGAGPEELEAEAGAEELEQAAEGKEVRFQASLPLTRIDEEEAAAAPEAETERVEGEEEDKEETQRDGAESKERDGEGRPAKSQEEGKRLYGRDEFEDLEWSEEVQKLQEQQLRSDLLDQYRSLLVERNRSQRYNLYLQHKIFEALRRKKGLEAAEVADRGAEAEAPEKEQAYLRHLGMLEELKKQQADDLQWYHQELGQLKRQCQEKLTRVEKEWRRFQALKKQVVMQAMGSCRMRGGRQAALREVEQIQALEDKKEKEMSAVRLENIQLKQSLVHFETRMRTQEDLTQGLLLIDFEQLKIENQTFNEKIEERNEELLKLRSKVTNSVQVITHVKEKLHFMDMENACKKTQLAEIEAQAALGRDILTKTKQAREGLRTDNIRLNQKCGLLGKDSLLRDLEEKVDKTELLHRRLESLKRHHASLTLSCRGVRQKIREAKAFLPS</sequence>
<proteinExistence type="evidence at protein level"/>
<feature type="chain" id="PRO_0000234096" description="Cilia- and flagella-associated protein 184">
    <location>
        <begin position="1"/>
        <end position="555"/>
    </location>
</feature>
<feature type="region of interest" description="Disordered" evidence="3">
    <location>
        <begin position="1"/>
        <end position="202"/>
    </location>
</feature>
<feature type="coiled-coil region" evidence="2">
    <location>
        <begin position="305"/>
        <end position="441"/>
    </location>
</feature>
<feature type="coiled-coil region" evidence="2">
    <location>
        <begin position="505"/>
        <end position="531"/>
    </location>
</feature>
<feature type="compositionally biased region" description="Basic and acidic residues" evidence="3">
    <location>
        <begin position="1"/>
        <end position="12"/>
    </location>
</feature>
<feature type="compositionally biased region" description="Acidic residues" evidence="3">
    <location>
        <begin position="41"/>
        <end position="54"/>
    </location>
</feature>
<feature type="compositionally biased region" description="Acidic residues" evidence="3">
    <location>
        <begin position="95"/>
        <end position="105"/>
    </location>
</feature>
<feature type="compositionally biased region" description="Low complexity" evidence="3">
    <location>
        <begin position="106"/>
        <end position="117"/>
    </location>
</feature>
<feature type="compositionally biased region" description="Acidic residues" evidence="3">
    <location>
        <begin position="118"/>
        <end position="131"/>
    </location>
</feature>
<feature type="compositionally biased region" description="Basic and acidic residues" evidence="3">
    <location>
        <begin position="174"/>
        <end position="202"/>
    </location>
</feature>
<feature type="sequence variant" id="VAR_026162" description="In dbSNP:rs871134." evidence="4">
    <original>E</original>
    <variation>K</variation>
    <location>
        <position position="96"/>
    </location>
</feature>
<comment type="function">
    <text evidence="1">In complex with CFAP263, acts as a regulator of ciliary beating that connects radial spoke 3 (RS3) to the inner dynein arm (IDA) and the nexin-dynein regulatory complex (N-DRC). The complex is positioned parallel to N-DRC and forms a connection between the arch at the base of RS3, the IDA tail and N-DRC.</text>
</comment>
<comment type="subunit">
    <text evidence="1">Forms a complex with CFAP263; the interaction is required for functional activity in cilia.</text>
</comment>
<comment type="interaction">
    <interactant intactId="EBI-12382974">
        <id>Q2M329</id>
    </interactant>
    <interactant intactId="EBI-1105213">
        <id>Q9UBB9</id>
        <label>TFIP11</label>
    </interactant>
    <organismsDiffer>false</organismsDiffer>
    <experiments>5</experiments>
</comment>
<comment type="interaction">
    <interactant intactId="EBI-12382974">
        <id>Q2M329</id>
    </interactant>
    <interactant intactId="EBI-12123928">
        <id>P09493-10</id>
        <label>TPM1</label>
    </interactant>
    <organismsDiffer>false</organismsDiffer>
    <experiments>3</experiments>
</comment>
<comment type="subcellular location">
    <subcellularLocation>
        <location evidence="1">Cell projection</location>
        <location evidence="1">Cilium</location>
    </subcellularLocation>
    <subcellularLocation>
        <location evidence="5">Cytoplasm</location>
        <location evidence="5">Cytoskeleton</location>
        <location evidence="5">Microtubule organizing center</location>
        <location evidence="5">Centrosome</location>
    </subcellularLocation>
    <text evidence="1">Localizes at cilium but not at the ciliary tips.</text>
</comment>
<comment type="similarity">
    <text evidence="6">Belongs to the CFAP184 family.</text>
</comment>
<protein>
    <recommendedName>
        <fullName evidence="6">Cilia- and flagella-associated protein 184</fullName>
    </recommendedName>
</protein>
<dbReference type="EMBL" id="AK075056">
    <property type="protein sequence ID" value="BAC11373.1"/>
    <property type="molecule type" value="mRNA"/>
</dbReference>
<dbReference type="EMBL" id="BC105055">
    <property type="protein sequence ID" value="AAI05056.1"/>
    <property type="molecule type" value="mRNA"/>
</dbReference>
<dbReference type="EMBL" id="BC112274">
    <property type="protein sequence ID" value="AAI12275.1"/>
    <property type="molecule type" value="mRNA"/>
</dbReference>
<dbReference type="CCDS" id="CCDS3395.1"/>
<dbReference type="RefSeq" id="NP_699207.1">
    <property type="nucleotide sequence ID" value="NM_153376.3"/>
</dbReference>
<dbReference type="PDB" id="8J07">
    <property type="method" value="EM"/>
    <property type="resolution" value="4.10 A"/>
    <property type="chains" value="i1=1-555"/>
</dbReference>
<dbReference type="PDBsum" id="8J07"/>
<dbReference type="EMDB" id="EMD-35888"/>
<dbReference type="SMR" id="Q2M329"/>
<dbReference type="BioGRID" id="129209">
    <property type="interactions" value="163"/>
</dbReference>
<dbReference type="FunCoup" id="Q2M329">
    <property type="interactions" value="115"/>
</dbReference>
<dbReference type="IntAct" id="Q2M329">
    <property type="interactions" value="160"/>
</dbReference>
<dbReference type="STRING" id="9606.ENSP00000309285"/>
<dbReference type="CarbonylDB" id="Q2M329"/>
<dbReference type="iPTMnet" id="Q2M329"/>
<dbReference type="PhosphoSitePlus" id="Q2M329"/>
<dbReference type="BioMuta" id="CCDC96"/>
<dbReference type="DMDM" id="94707508"/>
<dbReference type="MassIVE" id="Q2M329"/>
<dbReference type="PaxDb" id="9606-ENSP00000309285"/>
<dbReference type="PeptideAtlas" id="Q2M329"/>
<dbReference type="ProteomicsDB" id="61364"/>
<dbReference type="Antibodypedia" id="55414">
    <property type="antibodies" value="59 antibodies from 15 providers"/>
</dbReference>
<dbReference type="DNASU" id="257236"/>
<dbReference type="Ensembl" id="ENST00000310085.6">
    <property type="protein sequence ID" value="ENSP00000309285.4"/>
    <property type="gene ID" value="ENSG00000173013.6"/>
</dbReference>
<dbReference type="GeneID" id="257236"/>
<dbReference type="KEGG" id="hsa:257236"/>
<dbReference type="MANE-Select" id="ENST00000310085.6">
    <property type="protein sequence ID" value="ENSP00000309285.4"/>
    <property type="RefSeq nucleotide sequence ID" value="NM_153376.3"/>
    <property type="RefSeq protein sequence ID" value="NP_699207.1"/>
</dbReference>
<dbReference type="UCSC" id="uc003gjv.4">
    <property type="organism name" value="human"/>
</dbReference>
<dbReference type="AGR" id="HGNC:26900"/>
<dbReference type="CTD" id="257236"/>
<dbReference type="DisGeNET" id="257236"/>
<dbReference type="GeneCards" id="CFAP184"/>
<dbReference type="HGNC" id="HGNC:26900">
    <property type="gene designation" value="CFAP184"/>
</dbReference>
<dbReference type="HPA" id="ENSG00000173013">
    <property type="expression patterns" value="Tissue enriched (testis)"/>
</dbReference>
<dbReference type="MIM" id="619347">
    <property type="type" value="gene"/>
</dbReference>
<dbReference type="neXtProt" id="NX_Q2M329"/>
<dbReference type="OpenTargets" id="ENSG00000173013"/>
<dbReference type="PharmGKB" id="PA144596463"/>
<dbReference type="VEuPathDB" id="HostDB:ENSG00000173013"/>
<dbReference type="eggNOG" id="ENOG502QS75">
    <property type="taxonomic scope" value="Eukaryota"/>
</dbReference>
<dbReference type="GeneTree" id="ENSGT00950000183337"/>
<dbReference type="HOGENOM" id="CLU_026534_0_0_1"/>
<dbReference type="InParanoid" id="Q2M329"/>
<dbReference type="OMA" id="RLQQKCG"/>
<dbReference type="OrthoDB" id="10254794at2759"/>
<dbReference type="PAN-GO" id="Q2M329">
    <property type="GO annotations" value="3 GO annotations based on evolutionary models"/>
</dbReference>
<dbReference type="PhylomeDB" id="Q2M329"/>
<dbReference type="TreeFam" id="TF328830"/>
<dbReference type="PathwayCommons" id="Q2M329"/>
<dbReference type="SignaLink" id="Q2M329"/>
<dbReference type="BioGRID-ORCS" id="257236">
    <property type="hits" value="21 hits in 1153 CRISPR screens"/>
</dbReference>
<dbReference type="GenomeRNAi" id="257236"/>
<dbReference type="Pharos" id="Q2M329">
    <property type="development level" value="Tdark"/>
</dbReference>
<dbReference type="PRO" id="PR:Q2M329"/>
<dbReference type="Proteomes" id="UP000005640">
    <property type="component" value="Chromosome 4"/>
</dbReference>
<dbReference type="RNAct" id="Q2M329">
    <property type="molecule type" value="protein"/>
</dbReference>
<dbReference type="Bgee" id="ENSG00000173013">
    <property type="expression patterns" value="Expressed in left testis and 107 other cell types or tissues"/>
</dbReference>
<dbReference type="GO" id="GO:0005930">
    <property type="term" value="C:axoneme"/>
    <property type="evidence" value="ECO:0000318"/>
    <property type="project" value="GO_Central"/>
</dbReference>
<dbReference type="GO" id="GO:0005813">
    <property type="term" value="C:centrosome"/>
    <property type="evidence" value="ECO:0007669"/>
    <property type="project" value="UniProtKB-SubCell"/>
</dbReference>
<dbReference type="GO" id="GO:0036064">
    <property type="term" value="C:ciliary basal body"/>
    <property type="evidence" value="ECO:0000318"/>
    <property type="project" value="GO_Central"/>
</dbReference>
<dbReference type="GO" id="GO:0060271">
    <property type="term" value="P:cilium assembly"/>
    <property type="evidence" value="ECO:0000318"/>
    <property type="project" value="GO_Central"/>
</dbReference>
<dbReference type="InterPro" id="IPR051885">
    <property type="entry name" value="CC_domain-Cilium_Assoc"/>
</dbReference>
<dbReference type="InterPro" id="IPR025254">
    <property type="entry name" value="CCDC113/CCDC96_CC"/>
</dbReference>
<dbReference type="PANTHER" id="PTHR15654">
    <property type="entry name" value="COILED-COIL DOMAIN-CONTAINING PROTEIN 113-RELATED"/>
    <property type="match status" value="1"/>
</dbReference>
<dbReference type="PANTHER" id="PTHR15654:SF1">
    <property type="entry name" value="COILED-COIL DOMAIN-CONTAINING PROTEIN 96"/>
    <property type="match status" value="1"/>
</dbReference>
<dbReference type="Pfam" id="PF13870">
    <property type="entry name" value="CCDC113_CCDC96_CC"/>
    <property type="match status" value="1"/>
</dbReference>
<reference key="1">
    <citation type="journal article" date="2004" name="Nat. Genet.">
        <title>Complete sequencing and characterization of 21,243 full-length human cDNAs.</title>
        <authorList>
            <person name="Ota T."/>
            <person name="Suzuki Y."/>
            <person name="Nishikawa T."/>
            <person name="Otsuki T."/>
            <person name="Sugiyama T."/>
            <person name="Irie R."/>
            <person name="Wakamatsu A."/>
            <person name="Hayashi K."/>
            <person name="Sato H."/>
            <person name="Nagai K."/>
            <person name="Kimura K."/>
            <person name="Makita H."/>
            <person name="Sekine M."/>
            <person name="Obayashi M."/>
            <person name="Nishi T."/>
            <person name="Shibahara T."/>
            <person name="Tanaka T."/>
            <person name="Ishii S."/>
            <person name="Yamamoto J."/>
            <person name="Saito K."/>
            <person name="Kawai Y."/>
            <person name="Isono Y."/>
            <person name="Nakamura Y."/>
            <person name="Nagahari K."/>
            <person name="Murakami K."/>
            <person name="Yasuda T."/>
            <person name="Iwayanagi T."/>
            <person name="Wagatsuma M."/>
            <person name="Shiratori A."/>
            <person name="Sudo H."/>
            <person name="Hosoiri T."/>
            <person name="Kaku Y."/>
            <person name="Kodaira H."/>
            <person name="Kondo H."/>
            <person name="Sugawara M."/>
            <person name="Takahashi M."/>
            <person name="Kanda K."/>
            <person name="Yokoi T."/>
            <person name="Furuya T."/>
            <person name="Kikkawa E."/>
            <person name="Omura Y."/>
            <person name="Abe K."/>
            <person name="Kamihara K."/>
            <person name="Katsuta N."/>
            <person name="Sato K."/>
            <person name="Tanikawa M."/>
            <person name="Yamazaki M."/>
            <person name="Ninomiya K."/>
            <person name="Ishibashi T."/>
            <person name="Yamashita H."/>
            <person name="Murakawa K."/>
            <person name="Fujimori K."/>
            <person name="Tanai H."/>
            <person name="Kimata M."/>
            <person name="Watanabe M."/>
            <person name="Hiraoka S."/>
            <person name="Chiba Y."/>
            <person name="Ishida S."/>
            <person name="Ono Y."/>
            <person name="Takiguchi S."/>
            <person name="Watanabe S."/>
            <person name="Yosida M."/>
            <person name="Hotuta T."/>
            <person name="Kusano J."/>
            <person name="Kanehori K."/>
            <person name="Takahashi-Fujii A."/>
            <person name="Hara H."/>
            <person name="Tanase T.-O."/>
            <person name="Nomura Y."/>
            <person name="Togiya S."/>
            <person name="Komai F."/>
            <person name="Hara R."/>
            <person name="Takeuchi K."/>
            <person name="Arita M."/>
            <person name="Imose N."/>
            <person name="Musashino K."/>
            <person name="Yuuki H."/>
            <person name="Oshima A."/>
            <person name="Sasaki N."/>
            <person name="Aotsuka S."/>
            <person name="Yoshikawa Y."/>
            <person name="Matsunawa H."/>
            <person name="Ichihara T."/>
            <person name="Shiohata N."/>
            <person name="Sano S."/>
            <person name="Moriya S."/>
            <person name="Momiyama H."/>
            <person name="Satoh N."/>
            <person name="Takami S."/>
            <person name="Terashima Y."/>
            <person name="Suzuki O."/>
            <person name="Nakagawa S."/>
            <person name="Senoh A."/>
            <person name="Mizoguchi H."/>
            <person name="Goto Y."/>
            <person name="Shimizu F."/>
            <person name="Wakebe H."/>
            <person name="Hishigaki H."/>
            <person name="Watanabe T."/>
            <person name="Sugiyama A."/>
            <person name="Takemoto M."/>
            <person name="Kawakami B."/>
            <person name="Yamazaki M."/>
            <person name="Watanabe K."/>
            <person name="Kumagai A."/>
            <person name="Itakura S."/>
            <person name="Fukuzumi Y."/>
            <person name="Fujimori Y."/>
            <person name="Komiyama M."/>
            <person name="Tashiro H."/>
            <person name="Tanigami A."/>
            <person name="Fujiwara T."/>
            <person name="Ono T."/>
            <person name="Yamada K."/>
            <person name="Fujii Y."/>
            <person name="Ozaki K."/>
            <person name="Hirao M."/>
            <person name="Ohmori Y."/>
            <person name="Kawabata A."/>
            <person name="Hikiji T."/>
            <person name="Kobatake N."/>
            <person name="Inagaki H."/>
            <person name="Ikema Y."/>
            <person name="Okamoto S."/>
            <person name="Okitani R."/>
            <person name="Kawakami T."/>
            <person name="Noguchi S."/>
            <person name="Itoh T."/>
            <person name="Shigeta K."/>
            <person name="Senba T."/>
            <person name="Matsumura K."/>
            <person name="Nakajima Y."/>
            <person name="Mizuno T."/>
            <person name="Morinaga M."/>
            <person name="Sasaki M."/>
            <person name="Togashi T."/>
            <person name="Oyama M."/>
            <person name="Hata H."/>
            <person name="Watanabe M."/>
            <person name="Komatsu T."/>
            <person name="Mizushima-Sugano J."/>
            <person name="Satoh T."/>
            <person name="Shirai Y."/>
            <person name="Takahashi Y."/>
            <person name="Nakagawa K."/>
            <person name="Okumura K."/>
            <person name="Nagase T."/>
            <person name="Nomura N."/>
            <person name="Kikuchi H."/>
            <person name="Masuho Y."/>
            <person name="Yamashita R."/>
            <person name="Nakai K."/>
            <person name="Yada T."/>
            <person name="Nakamura Y."/>
            <person name="Ohara O."/>
            <person name="Isogai T."/>
            <person name="Sugano S."/>
        </authorList>
    </citation>
    <scope>NUCLEOTIDE SEQUENCE [LARGE SCALE MRNA]</scope>
    <source>
        <tissue>Ovary</tissue>
    </source>
</reference>
<reference key="2">
    <citation type="journal article" date="2004" name="Genome Res.">
        <title>The status, quality, and expansion of the NIH full-length cDNA project: the Mammalian Gene Collection (MGC).</title>
        <authorList>
            <consortium name="The MGC Project Team"/>
        </authorList>
    </citation>
    <scope>NUCLEOTIDE SEQUENCE [LARGE SCALE MRNA]</scope>
    <scope>VARIANT LYS-96</scope>
    <source>
        <tissue>Brain</tissue>
    </source>
</reference>
<reference key="3">
    <citation type="journal article" date="2014" name="J. Cell Sci.">
        <title>Proteomic analysis of mammalian sperm cells identifies new components of the centrosome.</title>
        <authorList>
            <person name="Firat-Karalar E.N."/>
            <person name="Sante J."/>
            <person name="Elliott S."/>
            <person name="Stearns T."/>
        </authorList>
    </citation>
    <scope>SUBCELLULAR LOCATION</scope>
</reference>